<protein>
    <recommendedName>
        <fullName evidence="1">Integration host factor subunit alpha</fullName>
        <shortName evidence="1">IHF-alpha</shortName>
    </recommendedName>
</protein>
<dbReference type="EMBL" id="CP000606">
    <property type="protein sequence ID" value="ABO24080.1"/>
    <property type="molecule type" value="Genomic_DNA"/>
</dbReference>
<dbReference type="RefSeq" id="WP_011866012.1">
    <property type="nucleotide sequence ID" value="NC_009092.1"/>
</dbReference>
<dbReference type="SMR" id="A3QF32"/>
<dbReference type="STRING" id="323850.Shew_2214"/>
<dbReference type="KEGG" id="slo:Shew_2214"/>
<dbReference type="eggNOG" id="COG0776">
    <property type="taxonomic scope" value="Bacteria"/>
</dbReference>
<dbReference type="HOGENOM" id="CLU_105066_1_3_6"/>
<dbReference type="OrthoDB" id="9797747at2"/>
<dbReference type="Proteomes" id="UP000001558">
    <property type="component" value="Chromosome"/>
</dbReference>
<dbReference type="GO" id="GO:0005829">
    <property type="term" value="C:cytosol"/>
    <property type="evidence" value="ECO:0007669"/>
    <property type="project" value="TreeGrafter"/>
</dbReference>
<dbReference type="GO" id="GO:0003677">
    <property type="term" value="F:DNA binding"/>
    <property type="evidence" value="ECO:0007669"/>
    <property type="project" value="UniProtKB-UniRule"/>
</dbReference>
<dbReference type="GO" id="GO:0030527">
    <property type="term" value="F:structural constituent of chromatin"/>
    <property type="evidence" value="ECO:0007669"/>
    <property type="project" value="InterPro"/>
</dbReference>
<dbReference type="GO" id="GO:0006310">
    <property type="term" value="P:DNA recombination"/>
    <property type="evidence" value="ECO:0007669"/>
    <property type="project" value="UniProtKB-UniRule"/>
</dbReference>
<dbReference type="GO" id="GO:0009893">
    <property type="term" value="P:positive regulation of metabolic process"/>
    <property type="evidence" value="ECO:0007669"/>
    <property type="project" value="UniProtKB-ARBA"/>
</dbReference>
<dbReference type="GO" id="GO:0006355">
    <property type="term" value="P:regulation of DNA-templated transcription"/>
    <property type="evidence" value="ECO:0007669"/>
    <property type="project" value="UniProtKB-UniRule"/>
</dbReference>
<dbReference type="GO" id="GO:0006417">
    <property type="term" value="P:regulation of translation"/>
    <property type="evidence" value="ECO:0007669"/>
    <property type="project" value="UniProtKB-UniRule"/>
</dbReference>
<dbReference type="CDD" id="cd13835">
    <property type="entry name" value="IHF_A"/>
    <property type="match status" value="1"/>
</dbReference>
<dbReference type="FunFam" id="4.10.520.10:FF:000002">
    <property type="entry name" value="Integration host factor subunit alpha"/>
    <property type="match status" value="1"/>
</dbReference>
<dbReference type="Gene3D" id="4.10.520.10">
    <property type="entry name" value="IHF-like DNA-binding proteins"/>
    <property type="match status" value="1"/>
</dbReference>
<dbReference type="HAMAP" id="MF_00380">
    <property type="entry name" value="IHF_alpha"/>
    <property type="match status" value="1"/>
</dbReference>
<dbReference type="InterPro" id="IPR000119">
    <property type="entry name" value="Hist_DNA-bd"/>
</dbReference>
<dbReference type="InterPro" id="IPR020816">
    <property type="entry name" value="Histone-like_DNA-bd_CS"/>
</dbReference>
<dbReference type="InterPro" id="IPR010992">
    <property type="entry name" value="IHF-like_DNA-bd_dom_sf"/>
</dbReference>
<dbReference type="InterPro" id="IPR005684">
    <property type="entry name" value="IHF_alpha"/>
</dbReference>
<dbReference type="NCBIfam" id="TIGR00987">
    <property type="entry name" value="himA"/>
    <property type="match status" value="1"/>
</dbReference>
<dbReference type="NCBIfam" id="NF001401">
    <property type="entry name" value="PRK00285.1"/>
    <property type="match status" value="1"/>
</dbReference>
<dbReference type="PANTHER" id="PTHR33175">
    <property type="entry name" value="DNA-BINDING PROTEIN HU"/>
    <property type="match status" value="1"/>
</dbReference>
<dbReference type="PANTHER" id="PTHR33175:SF2">
    <property type="entry name" value="INTEGRATION HOST FACTOR SUBUNIT ALPHA"/>
    <property type="match status" value="1"/>
</dbReference>
<dbReference type="Pfam" id="PF00216">
    <property type="entry name" value="Bac_DNA_binding"/>
    <property type="match status" value="1"/>
</dbReference>
<dbReference type="PRINTS" id="PR01727">
    <property type="entry name" value="DNABINDINGHU"/>
</dbReference>
<dbReference type="SMART" id="SM00411">
    <property type="entry name" value="BHL"/>
    <property type="match status" value="1"/>
</dbReference>
<dbReference type="SUPFAM" id="SSF47729">
    <property type="entry name" value="IHF-like DNA-binding proteins"/>
    <property type="match status" value="1"/>
</dbReference>
<dbReference type="PROSITE" id="PS00045">
    <property type="entry name" value="HISTONE_LIKE"/>
    <property type="match status" value="1"/>
</dbReference>
<feature type="chain" id="PRO_1000060570" description="Integration host factor subunit alpha">
    <location>
        <begin position="1"/>
        <end position="98"/>
    </location>
</feature>
<feature type="region of interest" description="Disordered" evidence="2">
    <location>
        <begin position="49"/>
        <end position="72"/>
    </location>
</feature>
<comment type="function">
    <text evidence="1">This protein is one of the two subunits of integration host factor, a specific DNA-binding protein that functions in genetic recombination as well as in transcriptional and translational control.</text>
</comment>
<comment type="subunit">
    <text evidence="1">Heterodimer of an alpha and a beta chain.</text>
</comment>
<comment type="similarity">
    <text evidence="1">Belongs to the bacterial histone-like protein family.</text>
</comment>
<name>IHFA_SHELP</name>
<sequence>MALTKAEMAEHLFETLGINKRVAKEMVEAFFEEIRQALENGEQVKLSGFGNFDLRDKNQRPGRNPKTGEDIPISARRVVTFRPGQKLKSRVEEANAGK</sequence>
<organism>
    <name type="scientific">Shewanella loihica (strain ATCC BAA-1088 / PV-4)</name>
    <dbReference type="NCBI Taxonomy" id="323850"/>
    <lineage>
        <taxon>Bacteria</taxon>
        <taxon>Pseudomonadati</taxon>
        <taxon>Pseudomonadota</taxon>
        <taxon>Gammaproteobacteria</taxon>
        <taxon>Alteromonadales</taxon>
        <taxon>Shewanellaceae</taxon>
        <taxon>Shewanella</taxon>
    </lineage>
</organism>
<keyword id="KW-0233">DNA recombination</keyword>
<keyword id="KW-0238">DNA-binding</keyword>
<keyword id="KW-1185">Reference proteome</keyword>
<keyword id="KW-0804">Transcription</keyword>
<keyword id="KW-0805">Transcription regulation</keyword>
<keyword id="KW-0810">Translation regulation</keyword>
<evidence type="ECO:0000255" key="1">
    <source>
        <dbReference type="HAMAP-Rule" id="MF_00380"/>
    </source>
</evidence>
<evidence type="ECO:0000256" key="2">
    <source>
        <dbReference type="SAM" id="MobiDB-lite"/>
    </source>
</evidence>
<gene>
    <name evidence="1" type="primary">ihfA</name>
    <name evidence="1" type="synonym">himA</name>
    <name type="ordered locus">Shew_2214</name>
</gene>
<proteinExistence type="inferred from homology"/>
<reference key="1">
    <citation type="submission" date="2007-03" db="EMBL/GenBank/DDBJ databases">
        <title>Complete sequence of Shewanella loihica PV-4.</title>
        <authorList>
            <consortium name="US DOE Joint Genome Institute"/>
            <person name="Copeland A."/>
            <person name="Lucas S."/>
            <person name="Lapidus A."/>
            <person name="Barry K."/>
            <person name="Detter J.C."/>
            <person name="Glavina del Rio T."/>
            <person name="Hammon N."/>
            <person name="Israni S."/>
            <person name="Dalin E."/>
            <person name="Tice H."/>
            <person name="Pitluck S."/>
            <person name="Chain P."/>
            <person name="Malfatti S."/>
            <person name="Shin M."/>
            <person name="Vergez L."/>
            <person name="Schmutz J."/>
            <person name="Larimer F."/>
            <person name="Land M."/>
            <person name="Hauser L."/>
            <person name="Kyrpides N."/>
            <person name="Mikhailova N."/>
            <person name="Romine M.F."/>
            <person name="Serres G."/>
            <person name="Fredrickson J."/>
            <person name="Tiedje J."/>
            <person name="Richardson P."/>
        </authorList>
    </citation>
    <scope>NUCLEOTIDE SEQUENCE [LARGE SCALE GENOMIC DNA]</scope>
    <source>
        <strain>ATCC BAA-1088 / PV-4</strain>
    </source>
</reference>
<accession>A3QF32</accession>